<organism>
    <name type="scientific">Streptococcus pyogenes serotype M12 (strain MGAS9429)</name>
    <dbReference type="NCBI Taxonomy" id="370551"/>
    <lineage>
        <taxon>Bacteria</taxon>
        <taxon>Bacillati</taxon>
        <taxon>Bacillota</taxon>
        <taxon>Bacilli</taxon>
        <taxon>Lactobacillales</taxon>
        <taxon>Streptococcaceae</taxon>
        <taxon>Streptococcus</taxon>
    </lineage>
</organism>
<protein>
    <recommendedName>
        <fullName evidence="1">Large ribosomal subunit protein uL2</fullName>
    </recommendedName>
    <alternativeName>
        <fullName evidence="3">50S ribosomal protein L2</fullName>
    </alternativeName>
</protein>
<dbReference type="EMBL" id="CP000259">
    <property type="protein sequence ID" value="ABF31235.1"/>
    <property type="molecule type" value="Genomic_DNA"/>
</dbReference>
<dbReference type="RefSeq" id="WP_002986654.1">
    <property type="nucleotide sequence ID" value="NC_008021.1"/>
</dbReference>
<dbReference type="SMR" id="Q1JP14"/>
<dbReference type="GeneID" id="83689570"/>
<dbReference type="KEGG" id="spk:MGAS9429_Spy0047"/>
<dbReference type="HOGENOM" id="CLU_036235_2_1_9"/>
<dbReference type="Proteomes" id="UP000002433">
    <property type="component" value="Chromosome"/>
</dbReference>
<dbReference type="GO" id="GO:0015934">
    <property type="term" value="C:large ribosomal subunit"/>
    <property type="evidence" value="ECO:0007669"/>
    <property type="project" value="InterPro"/>
</dbReference>
<dbReference type="GO" id="GO:0019843">
    <property type="term" value="F:rRNA binding"/>
    <property type="evidence" value="ECO:0007669"/>
    <property type="project" value="UniProtKB-UniRule"/>
</dbReference>
<dbReference type="GO" id="GO:0003735">
    <property type="term" value="F:structural constituent of ribosome"/>
    <property type="evidence" value="ECO:0007669"/>
    <property type="project" value="InterPro"/>
</dbReference>
<dbReference type="GO" id="GO:0016740">
    <property type="term" value="F:transferase activity"/>
    <property type="evidence" value="ECO:0007669"/>
    <property type="project" value="InterPro"/>
</dbReference>
<dbReference type="GO" id="GO:0002181">
    <property type="term" value="P:cytoplasmic translation"/>
    <property type="evidence" value="ECO:0007669"/>
    <property type="project" value="TreeGrafter"/>
</dbReference>
<dbReference type="FunFam" id="2.30.30.30:FF:000001">
    <property type="entry name" value="50S ribosomal protein L2"/>
    <property type="match status" value="1"/>
</dbReference>
<dbReference type="FunFam" id="2.40.50.140:FF:000003">
    <property type="entry name" value="50S ribosomal protein L2"/>
    <property type="match status" value="1"/>
</dbReference>
<dbReference type="FunFam" id="4.10.950.10:FF:000001">
    <property type="entry name" value="50S ribosomal protein L2"/>
    <property type="match status" value="1"/>
</dbReference>
<dbReference type="Gene3D" id="2.30.30.30">
    <property type="match status" value="1"/>
</dbReference>
<dbReference type="Gene3D" id="2.40.50.140">
    <property type="entry name" value="Nucleic acid-binding proteins"/>
    <property type="match status" value="1"/>
</dbReference>
<dbReference type="Gene3D" id="4.10.950.10">
    <property type="entry name" value="Ribosomal protein L2, domain 3"/>
    <property type="match status" value="1"/>
</dbReference>
<dbReference type="HAMAP" id="MF_01320_B">
    <property type="entry name" value="Ribosomal_uL2_B"/>
    <property type="match status" value="1"/>
</dbReference>
<dbReference type="InterPro" id="IPR012340">
    <property type="entry name" value="NA-bd_OB-fold"/>
</dbReference>
<dbReference type="InterPro" id="IPR014722">
    <property type="entry name" value="Rib_uL2_dom2"/>
</dbReference>
<dbReference type="InterPro" id="IPR002171">
    <property type="entry name" value="Ribosomal_uL2"/>
</dbReference>
<dbReference type="InterPro" id="IPR005880">
    <property type="entry name" value="Ribosomal_uL2_bac/org-type"/>
</dbReference>
<dbReference type="InterPro" id="IPR022669">
    <property type="entry name" value="Ribosomal_uL2_C"/>
</dbReference>
<dbReference type="InterPro" id="IPR022671">
    <property type="entry name" value="Ribosomal_uL2_CS"/>
</dbReference>
<dbReference type="InterPro" id="IPR014726">
    <property type="entry name" value="Ribosomal_uL2_dom3"/>
</dbReference>
<dbReference type="InterPro" id="IPR022666">
    <property type="entry name" value="Ribosomal_uL2_RNA-bd_dom"/>
</dbReference>
<dbReference type="InterPro" id="IPR008991">
    <property type="entry name" value="Translation_prot_SH3-like_sf"/>
</dbReference>
<dbReference type="NCBIfam" id="TIGR01171">
    <property type="entry name" value="rplB_bact"/>
    <property type="match status" value="1"/>
</dbReference>
<dbReference type="PANTHER" id="PTHR13691:SF5">
    <property type="entry name" value="LARGE RIBOSOMAL SUBUNIT PROTEIN UL2M"/>
    <property type="match status" value="1"/>
</dbReference>
<dbReference type="PANTHER" id="PTHR13691">
    <property type="entry name" value="RIBOSOMAL PROTEIN L2"/>
    <property type="match status" value="1"/>
</dbReference>
<dbReference type="Pfam" id="PF00181">
    <property type="entry name" value="Ribosomal_L2"/>
    <property type="match status" value="1"/>
</dbReference>
<dbReference type="Pfam" id="PF03947">
    <property type="entry name" value="Ribosomal_L2_C"/>
    <property type="match status" value="1"/>
</dbReference>
<dbReference type="PIRSF" id="PIRSF002158">
    <property type="entry name" value="Ribosomal_L2"/>
    <property type="match status" value="1"/>
</dbReference>
<dbReference type="SMART" id="SM01383">
    <property type="entry name" value="Ribosomal_L2"/>
    <property type="match status" value="1"/>
</dbReference>
<dbReference type="SMART" id="SM01382">
    <property type="entry name" value="Ribosomal_L2_C"/>
    <property type="match status" value="1"/>
</dbReference>
<dbReference type="SUPFAM" id="SSF50249">
    <property type="entry name" value="Nucleic acid-binding proteins"/>
    <property type="match status" value="1"/>
</dbReference>
<dbReference type="SUPFAM" id="SSF50104">
    <property type="entry name" value="Translation proteins SH3-like domain"/>
    <property type="match status" value="1"/>
</dbReference>
<dbReference type="PROSITE" id="PS00467">
    <property type="entry name" value="RIBOSOMAL_L2"/>
    <property type="match status" value="1"/>
</dbReference>
<gene>
    <name evidence="1" type="primary">rplB</name>
    <name type="ordered locus">MGAS9429_Spy0047</name>
</gene>
<name>RL2_STRPC</name>
<reference key="1">
    <citation type="journal article" date="2006" name="Proc. Natl. Acad. Sci. U.S.A.">
        <title>Molecular genetic anatomy of inter- and intraserotype variation in the human bacterial pathogen group A Streptococcus.</title>
        <authorList>
            <person name="Beres S.B."/>
            <person name="Richter E.W."/>
            <person name="Nagiec M.J."/>
            <person name="Sumby P."/>
            <person name="Porcella S.F."/>
            <person name="DeLeo F.R."/>
            <person name="Musser J.M."/>
        </authorList>
    </citation>
    <scope>NUCLEOTIDE SEQUENCE [LARGE SCALE GENOMIC DNA]</scope>
    <source>
        <strain>MGAS9429</strain>
    </source>
</reference>
<feature type="chain" id="PRO_0000310022" description="Large ribosomal subunit protein uL2">
    <location>
        <begin position="1"/>
        <end position="277"/>
    </location>
</feature>
<feature type="region of interest" description="Disordered" evidence="2">
    <location>
        <begin position="219"/>
        <end position="277"/>
    </location>
</feature>
<feature type="compositionally biased region" description="Basic and acidic residues" evidence="2">
    <location>
        <begin position="264"/>
        <end position="277"/>
    </location>
</feature>
<comment type="function">
    <text evidence="1">One of the primary rRNA binding proteins. Required for association of the 30S and 50S subunits to form the 70S ribosome, for tRNA binding and peptide bond formation. It has been suggested to have peptidyltransferase activity; this is somewhat controversial. Makes several contacts with the 16S rRNA in the 70S ribosome.</text>
</comment>
<comment type="subunit">
    <text evidence="1">Part of the 50S ribosomal subunit. Forms a bridge to the 30S subunit in the 70S ribosome.</text>
</comment>
<comment type="similarity">
    <text evidence="1">Belongs to the universal ribosomal protein uL2 family.</text>
</comment>
<evidence type="ECO:0000255" key="1">
    <source>
        <dbReference type="HAMAP-Rule" id="MF_01320"/>
    </source>
</evidence>
<evidence type="ECO:0000256" key="2">
    <source>
        <dbReference type="SAM" id="MobiDB-lite"/>
    </source>
</evidence>
<evidence type="ECO:0000305" key="3"/>
<accession>Q1JP14</accession>
<sequence>MGIKVYKPTTNGRRNMTSLDFAEITTSTPEKSLLVSLKSKAGRNNNGRITVRHQGGGHKRHYRLIDFKRNKDGVEAVVKTIEYDPNRTANIALVHYTDGVKAYIIAPKGLEVGQRIVSGPDADIKVGNALPLANIPVGTVVHNIELKPGKGGELVRAAGASAQVLGQEGKYVLVRLQSGEVRMILGTCRATIGTVGNEQQSLVNIGKAGRSRWKGIRPTVRGSVMNPNDHPHGGGEGKAPVGRKAPSTPWGKPALGLKTRNKKAKSDKLIVRRRNEK</sequence>
<proteinExistence type="inferred from homology"/>
<keyword id="KW-0687">Ribonucleoprotein</keyword>
<keyword id="KW-0689">Ribosomal protein</keyword>
<keyword id="KW-0694">RNA-binding</keyword>
<keyword id="KW-0699">rRNA-binding</keyword>